<feature type="chain" id="PRO_1000065836" description="UPF0434 protein Bcep1808_2639">
    <location>
        <begin position="1"/>
        <end position="67"/>
    </location>
</feature>
<gene>
    <name type="ordered locus">Bcep1808_2639</name>
</gene>
<name>Y2639_BURVG</name>
<comment type="similarity">
    <text evidence="1">Belongs to the UPF0434 family.</text>
</comment>
<accession>A4JH78</accession>
<protein>
    <recommendedName>
        <fullName evidence="1">UPF0434 protein Bcep1808_2639</fullName>
    </recommendedName>
</protein>
<proteinExistence type="inferred from homology"/>
<organism>
    <name type="scientific">Burkholderia vietnamiensis (strain G4 / LMG 22486)</name>
    <name type="common">Burkholderia cepacia (strain R1808)</name>
    <dbReference type="NCBI Taxonomy" id="269482"/>
    <lineage>
        <taxon>Bacteria</taxon>
        <taxon>Pseudomonadati</taxon>
        <taxon>Pseudomonadota</taxon>
        <taxon>Betaproteobacteria</taxon>
        <taxon>Burkholderiales</taxon>
        <taxon>Burkholderiaceae</taxon>
        <taxon>Burkholderia</taxon>
        <taxon>Burkholderia cepacia complex</taxon>
    </lineage>
</organism>
<dbReference type="EMBL" id="CP000614">
    <property type="protein sequence ID" value="ABO55631.1"/>
    <property type="molecule type" value="Genomic_DNA"/>
</dbReference>
<dbReference type="SMR" id="A4JH78"/>
<dbReference type="KEGG" id="bvi:Bcep1808_2639"/>
<dbReference type="eggNOG" id="COG2835">
    <property type="taxonomic scope" value="Bacteria"/>
</dbReference>
<dbReference type="HOGENOM" id="CLU_155659_3_0_4"/>
<dbReference type="Proteomes" id="UP000002287">
    <property type="component" value="Chromosome 1"/>
</dbReference>
<dbReference type="GO" id="GO:0005829">
    <property type="term" value="C:cytosol"/>
    <property type="evidence" value="ECO:0007669"/>
    <property type="project" value="TreeGrafter"/>
</dbReference>
<dbReference type="FunFam" id="2.20.25.10:FF:000002">
    <property type="entry name" value="UPF0434 protein YcaR"/>
    <property type="match status" value="1"/>
</dbReference>
<dbReference type="Gene3D" id="2.20.25.10">
    <property type="match status" value="1"/>
</dbReference>
<dbReference type="HAMAP" id="MF_01187">
    <property type="entry name" value="UPF0434"/>
    <property type="match status" value="1"/>
</dbReference>
<dbReference type="InterPro" id="IPR005651">
    <property type="entry name" value="Trm112-like"/>
</dbReference>
<dbReference type="PANTHER" id="PTHR33505:SF4">
    <property type="entry name" value="PROTEIN PREY, MITOCHONDRIAL"/>
    <property type="match status" value="1"/>
</dbReference>
<dbReference type="PANTHER" id="PTHR33505">
    <property type="entry name" value="ZGC:162634"/>
    <property type="match status" value="1"/>
</dbReference>
<dbReference type="Pfam" id="PF03966">
    <property type="entry name" value="Trm112p"/>
    <property type="match status" value="1"/>
</dbReference>
<dbReference type="SUPFAM" id="SSF158997">
    <property type="entry name" value="Trm112p-like"/>
    <property type="match status" value="1"/>
</dbReference>
<evidence type="ECO:0000255" key="1">
    <source>
        <dbReference type="HAMAP-Rule" id="MF_01187"/>
    </source>
</evidence>
<sequence length="67" mass="7188">MDARLLEILVCPICKGPLHYDRAAQELICNADKLAYPIRDGIPVMLVDEARQTVEGTPVDPAGPAGS</sequence>
<reference key="1">
    <citation type="submission" date="2007-03" db="EMBL/GenBank/DDBJ databases">
        <title>Complete sequence of chromosome 1 of Burkholderia vietnamiensis G4.</title>
        <authorList>
            <consortium name="US DOE Joint Genome Institute"/>
            <person name="Copeland A."/>
            <person name="Lucas S."/>
            <person name="Lapidus A."/>
            <person name="Barry K."/>
            <person name="Detter J.C."/>
            <person name="Glavina del Rio T."/>
            <person name="Hammon N."/>
            <person name="Israni S."/>
            <person name="Dalin E."/>
            <person name="Tice H."/>
            <person name="Pitluck S."/>
            <person name="Chain P."/>
            <person name="Malfatti S."/>
            <person name="Shin M."/>
            <person name="Vergez L."/>
            <person name="Schmutz J."/>
            <person name="Larimer F."/>
            <person name="Land M."/>
            <person name="Hauser L."/>
            <person name="Kyrpides N."/>
            <person name="Tiedje J."/>
            <person name="Richardson P."/>
        </authorList>
    </citation>
    <scope>NUCLEOTIDE SEQUENCE [LARGE SCALE GENOMIC DNA]</scope>
    <source>
        <strain>G4 / LMG 22486</strain>
    </source>
</reference>